<reference key="1">
    <citation type="journal article" date="2000" name="Nature">
        <title>DNA sequence of both chromosomes of the cholera pathogen Vibrio cholerae.</title>
        <authorList>
            <person name="Heidelberg J.F."/>
            <person name="Eisen J.A."/>
            <person name="Nelson W.C."/>
            <person name="Clayton R.A."/>
            <person name="Gwinn M.L."/>
            <person name="Dodson R.J."/>
            <person name="Haft D.H."/>
            <person name="Hickey E.K."/>
            <person name="Peterson J.D."/>
            <person name="Umayam L.A."/>
            <person name="Gill S.R."/>
            <person name="Nelson K.E."/>
            <person name="Read T.D."/>
            <person name="Tettelin H."/>
            <person name="Richardson D.L."/>
            <person name="Ermolaeva M.D."/>
            <person name="Vamathevan J.J."/>
            <person name="Bass S."/>
            <person name="Qin H."/>
            <person name="Dragoi I."/>
            <person name="Sellers P."/>
            <person name="McDonald L.A."/>
            <person name="Utterback T.R."/>
            <person name="Fleischmann R.D."/>
            <person name="Nierman W.C."/>
            <person name="White O."/>
            <person name="Salzberg S.L."/>
            <person name="Smith H.O."/>
            <person name="Colwell R.R."/>
            <person name="Mekalanos J.J."/>
            <person name="Venter J.C."/>
            <person name="Fraser C.M."/>
        </authorList>
    </citation>
    <scope>NUCLEOTIDE SEQUENCE [LARGE SCALE GENOMIC DNA]</scope>
    <source>
        <strain>ATCC 39315 / El Tor Inaba N16961</strain>
    </source>
</reference>
<feature type="chain" id="PRO_0000205847" description="Nicotinate phosphoribosyltransferase">
    <location>
        <begin position="1"/>
        <end position="435"/>
    </location>
</feature>
<feature type="modified residue" description="Phosphohistidine; by autocatalysis" evidence="1">
    <location>
        <position position="230"/>
    </location>
</feature>
<feature type="turn" evidence="2">
    <location>
        <begin position="3"/>
        <end position="5"/>
    </location>
</feature>
<feature type="strand" evidence="2">
    <location>
        <begin position="16"/>
        <end position="18"/>
    </location>
</feature>
<feature type="helix" evidence="2">
    <location>
        <begin position="19"/>
        <end position="31"/>
    </location>
</feature>
<feature type="strand" evidence="2">
    <location>
        <begin position="36"/>
        <end position="45"/>
    </location>
</feature>
<feature type="turn" evidence="2">
    <location>
        <begin position="47"/>
        <end position="49"/>
    </location>
</feature>
<feature type="helix" evidence="2">
    <location>
        <begin position="50"/>
        <end position="62"/>
    </location>
</feature>
<feature type="helix" evidence="2">
    <location>
        <begin position="63"/>
        <end position="65"/>
    </location>
</feature>
<feature type="helix" evidence="2">
    <location>
        <begin position="70"/>
        <end position="79"/>
    </location>
</feature>
<feature type="helix" evidence="2">
    <location>
        <begin position="85"/>
        <end position="91"/>
    </location>
</feature>
<feature type="helix" evidence="2">
    <location>
        <begin position="98"/>
        <end position="101"/>
    </location>
</feature>
<feature type="strand" evidence="2">
    <location>
        <begin position="102"/>
        <end position="107"/>
    </location>
</feature>
<feature type="strand" evidence="2">
    <location>
        <begin position="114"/>
        <end position="122"/>
    </location>
</feature>
<feature type="helix" evidence="2">
    <location>
        <begin position="123"/>
        <end position="126"/>
    </location>
</feature>
<feature type="helix" evidence="2">
    <location>
        <begin position="129"/>
        <end position="145"/>
    </location>
</feature>
<feature type="helix" evidence="2">
    <location>
        <begin position="153"/>
        <end position="172"/>
    </location>
</feature>
<feature type="strand" evidence="2">
    <location>
        <begin position="179"/>
        <end position="181"/>
    </location>
</feature>
<feature type="helix" evidence="2">
    <location>
        <begin position="190"/>
        <end position="203"/>
    </location>
</feature>
<feature type="helix" evidence="2">
    <location>
        <begin position="205"/>
        <end position="207"/>
    </location>
</feature>
<feature type="strand" evidence="2">
    <location>
        <begin position="208"/>
        <end position="213"/>
    </location>
</feature>
<feature type="helix" evidence="2">
    <location>
        <begin position="214"/>
        <end position="220"/>
    </location>
</feature>
<feature type="helix" evidence="2">
    <location>
        <begin position="230"/>
        <end position="239"/>
    </location>
</feature>
<feature type="helix" evidence="2">
    <location>
        <begin position="242"/>
        <end position="244"/>
    </location>
</feature>
<feature type="helix" evidence="2">
    <location>
        <begin position="245"/>
        <end position="256"/>
    </location>
</feature>
<feature type="strand" evidence="2">
    <location>
        <begin position="263"/>
        <end position="266"/>
    </location>
</feature>
<feature type="helix" evidence="2">
    <location>
        <begin position="271"/>
        <end position="277"/>
    </location>
</feature>
<feature type="helix" evidence="2">
    <location>
        <begin position="280"/>
        <end position="285"/>
    </location>
</feature>
<feature type="strand" evidence="2">
    <location>
        <begin position="288"/>
        <end position="291"/>
    </location>
</feature>
<feature type="helix" evidence="2">
    <location>
        <begin position="296"/>
        <end position="309"/>
    </location>
</feature>
<feature type="helix" evidence="2">
    <location>
        <begin position="314"/>
        <end position="316"/>
    </location>
</feature>
<feature type="strand" evidence="2">
    <location>
        <begin position="317"/>
        <end position="321"/>
    </location>
</feature>
<feature type="helix" evidence="2">
    <location>
        <begin position="327"/>
        <end position="337"/>
    </location>
</feature>
<feature type="turn" evidence="2">
    <location>
        <begin position="338"/>
        <end position="340"/>
    </location>
</feature>
<feature type="strand" evidence="2">
    <location>
        <begin position="341"/>
        <end position="347"/>
    </location>
</feature>
<feature type="helix" evidence="2">
    <location>
        <begin position="349"/>
        <end position="352"/>
    </location>
</feature>
<feature type="strand" evidence="2">
    <location>
        <begin position="370"/>
        <end position="378"/>
    </location>
</feature>
<feature type="helix" evidence="2">
    <location>
        <begin position="390"/>
        <end position="392"/>
    </location>
</feature>
<feature type="helix" evidence="2">
    <location>
        <begin position="398"/>
        <end position="407"/>
    </location>
</feature>
<feature type="helix" evidence="2">
    <location>
        <begin position="414"/>
        <end position="425"/>
    </location>
</feature>
<comment type="function">
    <text evidence="1">Catalyzes the synthesis of beta-nicotinate D-ribonucleotide from nicotinate and 5-phospho-D-ribose 1-phosphate at the expense of ATP.</text>
</comment>
<comment type="catalytic activity">
    <reaction evidence="1">
        <text>nicotinate + 5-phospho-alpha-D-ribose 1-diphosphate + ATP + H2O = nicotinate beta-D-ribonucleotide + ADP + phosphate + diphosphate</text>
        <dbReference type="Rhea" id="RHEA:36163"/>
        <dbReference type="ChEBI" id="CHEBI:15377"/>
        <dbReference type="ChEBI" id="CHEBI:30616"/>
        <dbReference type="ChEBI" id="CHEBI:32544"/>
        <dbReference type="ChEBI" id="CHEBI:33019"/>
        <dbReference type="ChEBI" id="CHEBI:43474"/>
        <dbReference type="ChEBI" id="CHEBI:57502"/>
        <dbReference type="ChEBI" id="CHEBI:58017"/>
        <dbReference type="ChEBI" id="CHEBI:456216"/>
        <dbReference type="EC" id="6.3.4.21"/>
    </reaction>
</comment>
<comment type="pathway">
    <text evidence="1">Cofactor biosynthesis; NAD(+) biosynthesis; nicotinate D-ribonucleotide from nicotinate: step 1/1.</text>
</comment>
<comment type="PTM">
    <text evidence="1">Transiently phosphorylated on a His residue during the reaction cycle. Phosphorylation strongly increases the affinity for substrates and increases the rate of nicotinate D-ribonucleotide production. Dephosphorylation regenerates the low-affinity form of the enzyme, leading to product release.</text>
</comment>
<comment type="similarity">
    <text evidence="1">Belongs to the NAPRTase family.</text>
</comment>
<evidence type="ECO:0000255" key="1">
    <source>
        <dbReference type="HAMAP-Rule" id="MF_00570"/>
    </source>
</evidence>
<evidence type="ECO:0007829" key="2">
    <source>
        <dbReference type="PDB" id="4HL7"/>
    </source>
</evidence>
<protein>
    <recommendedName>
        <fullName evidence="1">Nicotinate phosphoribosyltransferase</fullName>
        <shortName evidence="1">NAPRTase</shortName>
        <ecNumber evidence="1">6.3.4.21</ecNumber>
    </recommendedName>
</protein>
<gene>
    <name evidence="1" type="primary">pncB</name>
    <name type="ordered locus">VC_A0098</name>
</gene>
<keyword id="KW-0002">3D-structure</keyword>
<keyword id="KW-0436">Ligase</keyword>
<keyword id="KW-0597">Phosphoprotein</keyword>
<keyword id="KW-0662">Pyridine nucleotide biosynthesis</keyword>
<keyword id="KW-1185">Reference proteome</keyword>
<sequence length="435" mass="50078">MNPRLFSPHIIRSLLDLDAYKINMMQAIHHFYPDVSVRYELIVRSEEDASGLLDAIRQEIAHLGTLRFSDADIHYLTQHAPHLKATFLQSLRYFHFVPQEQVEMGIVKQGGKQQLRISIRGSWRDTILYETLVMAIVSEVRSRQRWAEVPADLPLKVLKTKLDQLKAEIERRGINNFSLTEMGTRRRFSSQVQRDVLACLKQEIPQWVLGTSNYHFAREFDLKPIGTIAHEWFMGHQALVNERDSQQVALERWLTAFDGMLAIAPTDTLTIDAFLNDFNRHLANAYDGVRHDSGCPFRWGDKMIAHYQQLGIDPTTKLFIFSDGLDFDQALELCEYFAGRVKISFGIGTFLTNDLANWRNAAGVEYRPLSIVIKLAECQGRPVAKISDQPEKAMCEDPIFLANLKRRFNIELDVDALIQELRHQKRSPRHYISAA</sequence>
<organism>
    <name type="scientific">Vibrio cholerae serotype O1 (strain ATCC 39315 / El Tor Inaba N16961)</name>
    <dbReference type="NCBI Taxonomy" id="243277"/>
    <lineage>
        <taxon>Bacteria</taxon>
        <taxon>Pseudomonadati</taxon>
        <taxon>Pseudomonadota</taxon>
        <taxon>Gammaproteobacteria</taxon>
        <taxon>Vibrionales</taxon>
        <taxon>Vibrionaceae</taxon>
        <taxon>Vibrio</taxon>
    </lineage>
</organism>
<name>PNCB_VIBCH</name>
<accession>Q9KN67</accession>
<dbReference type="EC" id="6.3.4.21" evidence="1"/>
<dbReference type="EMBL" id="AE003853">
    <property type="protein sequence ID" value="AAF96012.1"/>
    <property type="molecule type" value="Genomic_DNA"/>
</dbReference>
<dbReference type="PIR" id="H82501">
    <property type="entry name" value="H82501"/>
</dbReference>
<dbReference type="RefSeq" id="NP_232499.1">
    <property type="nucleotide sequence ID" value="NC_002506.1"/>
</dbReference>
<dbReference type="RefSeq" id="WP_001069589.1">
    <property type="nucleotide sequence ID" value="NZ_LT906615.1"/>
</dbReference>
<dbReference type="PDB" id="4HL7">
    <property type="method" value="X-ray"/>
    <property type="resolution" value="1.80 A"/>
    <property type="chains" value="A/B=2-435"/>
</dbReference>
<dbReference type="PDBsum" id="4HL7"/>
<dbReference type="SMR" id="Q9KN67"/>
<dbReference type="STRING" id="243277.VC_A0098"/>
<dbReference type="DNASU" id="2612706"/>
<dbReference type="EnsemblBacteria" id="AAF96012">
    <property type="protein sequence ID" value="AAF96012"/>
    <property type="gene ID" value="VC_A0098"/>
</dbReference>
<dbReference type="KEGG" id="vch:VC_A0098"/>
<dbReference type="PATRIC" id="fig|243277.26.peg.2739"/>
<dbReference type="eggNOG" id="COG1488">
    <property type="taxonomic scope" value="Bacteria"/>
</dbReference>
<dbReference type="HOGENOM" id="CLU_030991_1_0_6"/>
<dbReference type="UniPathway" id="UPA00253">
    <property type="reaction ID" value="UER00457"/>
</dbReference>
<dbReference type="EvolutionaryTrace" id="Q9KN67"/>
<dbReference type="Proteomes" id="UP000000584">
    <property type="component" value="Chromosome 2"/>
</dbReference>
<dbReference type="GO" id="GO:0005829">
    <property type="term" value="C:cytosol"/>
    <property type="evidence" value="ECO:0000318"/>
    <property type="project" value="GO_Central"/>
</dbReference>
<dbReference type="GO" id="GO:0004516">
    <property type="term" value="F:nicotinate phosphoribosyltransferase activity"/>
    <property type="evidence" value="ECO:0000318"/>
    <property type="project" value="GO_Central"/>
</dbReference>
<dbReference type="GO" id="GO:0034355">
    <property type="term" value="P:NAD biosynthetic process via the salvage pathway"/>
    <property type="evidence" value="ECO:0000318"/>
    <property type="project" value="GO_Central"/>
</dbReference>
<dbReference type="CDD" id="cd01401">
    <property type="entry name" value="PncB_like"/>
    <property type="match status" value="1"/>
</dbReference>
<dbReference type="Gene3D" id="3.20.140.10">
    <property type="entry name" value="nicotinate phosphoribosyltransferase"/>
    <property type="match status" value="1"/>
</dbReference>
<dbReference type="HAMAP" id="MF_00570">
    <property type="entry name" value="NAPRTase"/>
    <property type="match status" value="1"/>
</dbReference>
<dbReference type="InterPro" id="IPR041525">
    <property type="entry name" value="N/Namide_PRibTrfase"/>
</dbReference>
<dbReference type="InterPro" id="IPR040727">
    <property type="entry name" value="NAPRTase_N"/>
</dbReference>
<dbReference type="InterPro" id="IPR006406">
    <property type="entry name" value="Nic_PRibTrfase"/>
</dbReference>
<dbReference type="InterPro" id="IPR007229">
    <property type="entry name" value="Nic_PRibTrfase-Fam"/>
</dbReference>
<dbReference type="InterPro" id="IPR036068">
    <property type="entry name" value="Nicotinate_pribotase-like_C"/>
</dbReference>
<dbReference type="NCBIfam" id="TIGR01514">
    <property type="entry name" value="NAPRTase"/>
    <property type="match status" value="1"/>
</dbReference>
<dbReference type="NCBIfam" id="NF003704">
    <property type="entry name" value="PRK05321.1"/>
    <property type="match status" value="1"/>
</dbReference>
<dbReference type="PANTHER" id="PTHR11098">
    <property type="entry name" value="NICOTINATE PHOSPHORIBOSYLTRANSFERASE"/>
    <property type="match status" value="1"/>
</dbReference>
<dbReference type="PANTHER" id="PTHR11098:SF1">
    <property type="entry name" value="NICOTINATE PHOSPHORIBOSYLTRANSFERASE"/>
    <property type="match status" value="1"/>
</dbReference>
<dbReference type="Pfam" id="PF04095">
    <property type="entry name" value="NAPRTase"/>
    <property type="match status" value="1"/>
</dbReference>
<dbReference type="Pfam" id="PF17767">
    <property type="entry name" value="NAPRTase_N"/>
    <property type="match status" value="1"/>
</dbReference>
<dbReference type="PIRSF" id="PIRSF000484">
    <property type="entry name" value="NAPRT"/>
    <property type="match status" value="1"/>
</dbReference>
<dbReference type="SUPFAM" id="SSF51690">
    <property type="entry name" value="Nicotinate/Quinolinate PRTase C-terminal domain-like"/>
    <property type="match status" value="1"/>
</dbReference>
<dbReference type="SUPFAM" id="SSF54675">
    <property type="entry name" value="Nicotinate/Quinolinate PRTase N-terminal domain-like"/>
    <property type="match status" value="1"/>
</dbReference>
<proteinExistence type="evidence at protein level"/>